<accession>P13681</accession>
<keyword id="KW-0131">Cell cycle</keyword>
<keyword id="KW-0132">Cell division</keyword>
<keyword id="KW-0378">Hydrolase</keyword>
<keyword id="KW-0464">Manganese</keyword>
<keyword id="KW-0479">Metal-binding</keyword>
<keyword id="KW-0498">Mitosis</keyword>
<keyword id="KW-0539">Nucleus</keyword>
<keyword id="KW-0597">Phosphoprotein</keyword>
<keyword id="KW-0904">Protein phosphatase</keyword>
<keyword id="KW-1185">Reference proteome</keyword>
<feature type="chain" id="PRO_0000058818" description="Serine/threonine-protein phosphatase PP1-1">
    <location>
        <begin position="1"/>
        <end position="327"/>
    </location>
</feature>
<feature type="region of interest" description="Disordered" evidence="2">
    <location>
        <begin position="305"/>
        <end position="327"/>
    </location>
</feature>
<feature type="compositionally biased region" description="Basic residues" evidence="2">
    <location>
        <begin position="317"/>
        <end position="327"/>
    </location>
</feature>
<feature type="active site" description="Proton donor" evidence="1">
    <location>
        <position position="124"/>
    </location>
</feature>
<feature type="binding site" evidence="1">
    <location>
        <position position="63"/>
    </location>
    <ligand>
        <name>Mn(2+)</name>
        <dbReference type="ChEBI" id="CHEBI:29035"/>
        <label>1</label>
    </ligand>
</feature>
<feature type="binding site" evidence="1">
    <location>
        <position position="65"/>
    </location>
    <ligand>
        <name>Mn(2+)</name>
        <dbReference type="ChEBI" id="CHEBI:29035"/>
        <label>1</label>
    </ligand>
</feature>
<feature type="binding site" evidence="1">
    <location>
        <position position="91"/>
    </location>
    <ligand>
        <name>Mn(2+)</name>
        <dbReference type="ChEBI" id="CHEBI:29035"/>
        <label>1</label>
    </ligand>
</feature>
<feature type="binding site" evidence="1">
    <location>
        <position position="91"/>
    </location>
    <ligand>
        <name>Mn(2+)</name>
        <dbReference type="ChEBI" id="CHEBI:29035"/>
        <label>2</label>
    </ligand>
</feature>
<feature type="binding site" evidence="1">
    <location>
        <position position="123"/>
    </location>
    <ligand>
        <name>Mn(2+)</name>
        <dbReference type="ChEBI" id="CHEBI:29035"/>
        <label>2</label>
    </ligand>
</feature>
<feature type="binding site" evidence="1">
    <location>
        <position position="172"/>
    </location>
    <ligand>
        <name>Mn(2+)</name>
        <dbReference type="ChEBI" id="CHEBI:29035"/>
        <label>2</label>
    </ligand>
</feature>
<feature type="binding site" evidence="1">
    <location>
        <position position="247"/>
    </location>
    <ligand>
        <name>Mn(2+)</name>
        <dbReference type="ChEBI" id="CHEBI:29035"/>
        <label>2</label>
    </ligand>
</feature>
<feature type="modified residue" description="Phosphothreonine; by CDC2" evidence="4">
    <location>
        <position position="316"/>
    </location>
</feature>
<feature type="mutagenesis site" description="Cold-sensitive phenotype.">
    <original>R</original>
    <variation>Q</variation>
    <location>
        <position position="245"/>
    </location>
</feature>
<feature type="sequence conflict" description="In Ref. 2." evidence="5" ref="2">
    <original>E</original>
    <variation>EGE</variation>
    <location>
        <position position="17"/>
    </location>
</feature>
<protein>
    <recommendedName>
        <fullName>Serine/threonine-protein phosphatase PP1-1</fullName>
        <ecNumber>3.1.3.16</ecNumber>
    </recommendedName>
</protein>
<reference key="1">
    <citation type="journal article" date="1989" name="Cell">
        <title>Involvement of a type 1 protein phosphatase encoded by bws1+ in fission yeast mitotic control.</title>
        <authorList>
            <person name="Booher R."/>
            <person name="Beach D."/>
        </authorList>
    </citation>
    <scope>NUCLEOTIDE SEQUENCE [GENOMIC DNA]</scope>
    <source>
        <strain>SP557</strain>
    </source>
</reference>
<reference key="2">
    <citation type="journal article" date="1989" name="Cell">
        <title>The fission yeast dis2+ gene required for chromosome disjoining encodes one of two putative type 1 protein phosphatases.</title>
        <authorList>
            <person name="Ohkura H."/>
            <person name="Kinoshita N."/>
            <person name="Miyatani S."/>
            <person name="Toda T."/>
            <person name="Yanagida M."/>
        </authorList>
    </citation>
    <scope>NUCLEOTIDE SEQUENCE [GENOMIC DNA]</scope>
</reference>
<reference key="3">
    <citation type="journal article" date="2002" name="Nature">
        <title>The genome sequence of Schizosaccharomyces pombe.</title>
        <authorList>
            <person name="Wood V."/>
            <person name="Gwilliam R."/>
            <person name="Rajandream M.A."/>
            <person name="Lyne M.H."/>
            <person name="Lyne R."/>
            <person name="Stewart A."/>
            <person name="Sgouros J.G."/>
            <person name="Peat N."/>
            <person name="Hayles J."/>
            <person name="Baker S.G."/>
            <person name="Basham D."/>
            <person name="Bowman S."/>
            <person name="Brooks K."/>
            <person name="Brown D."/>
            <person name="Brown S."/>
            <person name="Chillingworth T."/>
            <person name="Churcher C.M."/>
            <person name="Collins M."/>
            <person name="Connor R."/>
            <person name="Cronin A."/>
            <person name="Davis P."/>
            <person name="Feltwell T."/>
            <person name="Fraser A."/>
            <person name="Gentles S."/>
            <person name="Goble A."/>
            <person name="Hamlin N."/>
            <person name="Harris D.E."/>
            <person name="Hidalgo J."/>
            <person name="Hodgson G."/>
            <person name="Holroyd S."/>
            <person name="Hornsby T."/>
            <person name="Howarth S."/>
            <person name="Huckle E.J."/>
            <person name="Hunt S."/>
            <person name="Jagels K."/>
            <person name="James K.D."/>
            <person name="Jones L."/>
            <person name="Jones M."/>
            <person name="Leather S."/>
            <person name="McDonald S."/>
            <person name="McLean J."/>
            <person name="Mooney P."/>
            <person name="Moule S."/>
            <person name="Mungall K.L."/>
            <person name="Murphy L.D."/>
            <person name="Niblett D."/>
            <person name="Odell C."/>
            <person name="Oliver K."/>
            <person name="O'Neil S."/>
            <person name="Pearson D."/>
            <person name="Quail M.A."/>
            <person name="Rabbinowitsch E."/>
            <person name="Rutherford K.M."/>
            <person name="Rutter S."/>
            <person name="Saunders D."/>
            <person name="Seeger K."/>
            <person name="Sharp S."/>
            <person name="Skelton J."/>
            <person name="Simmonds M.N."/>
            <person name="Squares R."/>
            <person name="Squares S."/>
            <person name="Stevens K."/>
            <person name="Taylor K."/>
            <person name="Taylor R.G."/>
            <person name="Tivey A."/>
            <person name="Walsh S.V."/>
            <person name="Warren T."/>
            <person name="Whitehead S."/>
            <person name="Woodward J.R."/>
            <person name="Volckaert G."/>
            <person name="Aert R."/>
            <person name="Robben J."/>
            <person name="Grymonprez B."/>
            <person name="Weltjens I."/>
            <person name="Vanstreels E."/>
            <person name="Rieger M."/>
            <person name="Schaefer M."/>
            <person name="Mueller-Auer S."/>
            <person name="Gabel C."/>
            <person name="Fuchs M."/>
            <person name="Duesterhoeft A."/>
            <person name="Fritzc C."/>
            <person name="Holzer E."/>
            <person name="Moestl D."/>
            <person name="Hilbert H."/>
            <person name="Borzym K."/>
            <person name="Langer I."/>
            <person name="Beck A."/>
            <person name="Lehrach H."/>
            <person name="Reinhardt R."/>
            <person name="Pohl T.M."/>
            <person name="Eger P."/>
            <person name="Zimmermann W."/>
            <person name="Wedler H."/>
            <person name="Wambutt R."/>
            <person name="Purnelle B."/>
            <person name="Goffeau A."/>
            <person name="Cadieu E."/>
            <person name="Dreano S."/>
            <person name="Gloux S."/>
            <person name="Lelaure V."/>
            <person name="Mottier S."/>
            <person name="Galibert F."/>
            <person name="Aves S.J."/>
            <person name="Xiang Z."/>
            <person name="Hunt C."/>
            <person name="Moore K."/>
            <person name="Hurst S.M."/>
            <person name="Lucas M."/>
            <person name="Rochet M."/>
            <person name="Gaillardin C."/>
            <person name="Tallada V.A."/>
            <person name="Garzon A."/>
            <person name="Thode G."/>
            <person name="Daga R.R."/>
            <person name="Cruzado L."/>
            <person name="Jimenez J."/>
            <person name="Sanchez M."/>
            <person name="del Rey F."/>
            <person name="Benito J."/>
            <person name="Dominguez A."/>
            <person name="Revuelta J.L."/>
            <person name="Moreno S."/>
            <person name="Armstrong J."/>
            <person name="Forsburg S.L."/>
            <person name="Cerutti L."/>
            <person name="Lowe T."/>
            <person name="McCombie W.R."/>
            <person name="Paulsen I."/>
            <person name="Potashkin J."/>
            <person name="Shpakovski G.V."/>
            <person name="Ussery D."/>
            <person name="Barrell B.G."/>
            <person name="Nurse P."/>
        </authorList>
    </citation>
    <scope>NUCLEOTIDE SEQUENCE [LARGE SCALE GENOMIC DNA]</scope>
    <source>
        <strain>972 / ATCC 24843</strain>
    </source>
</reference>
<reference key="4">
    <citation type="journal article" date="1990" name="Cell">
        <title>Distinct, essential roles of type 1 and 2A protein phosphatases in the control of the fission yeast cell division cycle.</title>
        <authorList>
            <person name="Kinoshita N."/>
            <person name="Ohkura H."/>
            <person name="Yanagida M."/>
        </authorList>
    </citation>
    <scope>MUTANT CS</scope>
    <source>
        <strain>972 / HM123</strain>
    </source>
</reference>
<reference key="5">
    <citation type="journal article" date="1994" name="EMBO J.">
        <title>Phosphorylation of dis2 protein phosphatase at the C-terminal cdc2 consensus and its potential role in cell cycle regulation.</title>
        <authorList>
            <person name="Yamano H."/>
            <person name="Ishii K."/>
            <person name="Yanagida M."/>
        </authorList>
    </citation>
    <scope>PHOSPHORYLATION AT THR-316</scope>
</reference>
<reference key="6">
    <citation type="journal article" date="2012" name="J. Cell Sci.">
        <title>Plo1 phosphorylates Dam1 to promote chromosome bi-orientation in fission yeast.</title>
        <authorList>
            <person name="Buttrick G.J."/>
            <person name="Lancaster T.C."/>
            <person name="Meadows J.C."/>
            <person name="Millar J.B."/>
        </authorList>
    </citation>
    <scope>DISRUPTION PHENOTYPE</scope>
</reference>
<sequence>MSNPDVDLDSIIDRLLEVRGSRPGRQVQLSEDEIRFLCNKAREIFISQPILLELEAPLKICGDIHGQYYDLLRLFEYGGFPPEANYLFLGDYVDRGKQSLEVICLLLAYKIKYPENFFILRGNHECASINRIYGFYDECKRRYNIKLWKTFTDCFNCLPIAAIIDEKIFTMHGGLSPDLNSMDQIQRIMRPTDVPDTGLLCDLLWSDPDKDLTGWGDNDRGVSFTFGPDVVSRFLHKHDMDLVCRAHQVVEDGYEFFSKRQLVTLFSAPNYCGEFDNAGAMMSVDESLLCSFQILKPAEKKQRYGYQGSSQNWHMTPPRKNKTGNSK</sequence>
<organism>
    <name type="scientific">Schizosaccharomyces pombe (strain 972 / ATCC 24843)</name>
    <name type="common">Fission yeast</name>
    <dbReference type="NCBI Taxonomy" id="284812"/>
    <lineage>
        <taxon>Eukaryota</taxon>
        <taxon>Fungi</taxon>
        <taxon>Dikarya</taxon>
        <taxon>Ascomycota</taxon>
        <taxon>Taphrinomycotina</taxon>
        <taxon>Schizosaccharomycetes</taxon>
        <taxon>Schizosaccharomycetales</taxon>
        <taxon>Schizosaccharomycetaceae</taxon>
        <taxon>Schizosaccharomyces</taxon>
    </lineage>
</organism>
<evidence type="ECO:0000250" key="1"/>
<evidence type="ECO:0000256" key="2">
    <source>
        <dbReference type="SAM" id="MobiDB-lite"/>
    </source>
</evidence>
<evidence type="ECO:0000269" key="3">
    <source>
    </source>
</evidence>
<evidence type="ECO:0000269" key="4">
    <source>
    </source>
</evidence>
<evidence type="ECO:0000305" key="5"/>
<gene>
    <name type="primary">dis2</name>
    <name type="synonym">bws1</name>
    <name type="ORF">SPBC776.02c</name>
</gene>
<comment type="function">
    <text>Essential role in cell cycle control. PP1 is perhaps required for exit from mitosis.</text>
</comment>
<comment type="catalytic activity">
    <reaction>
        <text>O-phospho-L-seryl-[protein] + H2O = L-seryl-[protein] + phosphate</text>
        <dbReference type="Rhea" id="RHEA:20629"/>
        <dbReference type="Rhea" id="RHEA-COMP:9863"/>
        <dbReference type="Rhea" id="RHEA-COMP:11604"/>
        <dbReference type="ChEBI" id="CHEBI:15377"/>
        <dbReference type="ChEBI" id="CHEBI:29999"/>
        <dbReference type="ChEBI" id="CHEBI:43474"/>
        <dbReference type="ChEBI" id="CHEBI:83421"/>
        <dbReference type="EC" id="3.1.3.16"/>
    </reaction>
</comment>
<comment type="catalytic activity">
    <reaction>
        <text>O-phospho-L-threonyl-[protein] + H2O = L-threonyl-[protein] + phosphate</text>
        <dbReference type="Rhea" id="RHEA:47004"/>
        <dbReference type="Rhea" id="RHEA-COMP:11060"/>
        <dbReference type="Rhea" id="RHEA-COMP:11605"/>
        <dbReference type="ChEBI" id="CHEBI:15377"/>
        <dbReference type="ChEBI" id="CHEBI:30013"/>
        <dbReference type="ChEBI" id="CHEBI:43474"/>
        <dbReference type="ChEBI" id="CHEBI:61977"/>
        <dbReference type="EC" id="3.1.3.16"/>
    </reaction>
</comment>
<comment type="cofactor">
    <cofactor evidence="1">
        <name>Mn(2+)</name>
        <dbReference type="ChEBI" id="CHEBI:29035"/>
    </cofactor>
    <text evidence="1">Binds 2 manganese ions per subunit.</text>
</comment>
<comment type="subunit">
    <text>Oligomer.</text>
</comment>
<comment type="interaction">
    <interactant intactId="EBI-4320127">
        <id>P13681</id>
    </interactant>
    <interactant intactId="EBI-16132377">
        <id>Q9UT08</id>
        <label>paa1</label>
    </interactant>
    <organismsDiffer>false</organismsDiffer>
    <experiments>10</experiments>
</comment>
<comment type="interaction">
    <interactant intactId="EBI-4320127">
        <id>P13681</id>
    </interactant>
    <interactant intactId="EBI-16132256">
        <id>Q12702</id>
        <label>pab1</label>
    </interactant>
    <organismsDiffer>false</organismsDiffer>
    <experiments>9</experiments>
</comment>
<comment type="interaction">
    <interactant intactId="EBI-4320127">
        <id>P13681</id>
    </interactant>
    <interactant intactId="EBI-989357">
        <id>Q10428</id>
        <label>par1</label>
    </interactant>
    <organismsDiffer>false</organismsDiffer>
    <experiments>12</experiments>
</comment>
<comment type="interaction">
    <interactant intactId="EBI-4320127">
        <id>P13681</id>
    </interactant>
    <interactant intactId="EBI-16132213">
        <id>P22194</id>
        <label>sds22</label>
    </interactant>
    <organismsDiffer>false</organismsDiffer>
    <experiments>3</experiments>
</comment>
<comment type="interaction">
    <interactant intactId="EBI-4320127">
        <id>P13681</id>
    </interactant>
    <interactant intactId="EBI-1099982">
        <id>O60132</id>
        <label>tea4</label>
    </interactant>
    <organismsDiffer>false</organismsDiffer>
    <experiments>2</experiments>
</comment>
<comment type="subcellular location">
    <subcellularLocation>
        <location>Nucleus</location>
    </subcellularLocation>
</comment>
<comment type="disruption phenotype">
    <text evidence="3">Simultaneous knockout of dam1 results in inviability.</text>
</comment>
<comment type="similarity">
    <text evidence="5">Belongs to the PPP phosphatase family. PP-1 subfamily.</text>
</comment>
<dbReference type="EC" id="3.1.3.16"/>
<dbReference type="EMBL" id="M27075">
    <property type="protein sequence ID" value="AAA74731.1"/>
    <property type="molecule type" value="Genomic_DNA"/>
</dbReference>
<dbReference type="EMBL" id="M27068">
    <property type="protein sequence ID" value="AAA89197.1"/>
    <property type="molecule type" value="Genomic_DNA"/>
</dbReference>
<dbReference type="EMBL" id="CU329671">
    <property type="protein sequence ID" value="CAA22875.1"/>
    <property type="molecule type" value="Genomic_DNA"/>
</dbReference>
<dbReference type="PIR" id="A32550">
    <property type="entry name" value="A32550"/>
</dbReference>
<dbReference type="RefSeq" id="NP_596317.1">
    <property type="nucleotide sequence ID" value="NM_001022239.2"/>
</dbReference>
<dbReference type="SMR" id="P13681"/>
<dbReference type="BioGRID" id="277707">
    <property type="interactions" value="104"/>
</dbReference>
<dbReference type="DIP" id="DIP-61473N"/>
<dbReference type="FunCoup" id="P13681">
    <property type="interactions" value="518"/>
</dbReference>
<dbReference type="IntAct" id="P13681">
    <property type="interactions" value="10"/>
</dbReference>
<dbReference type="STRING" id="284812.P13681"/>
<dbReference type="iPTMnet" id="P13681"/>
<dbReference type="PaxDb" id="4896-SPBC776.02c.1"/>
<dbReference type="EnsemblFungi" id="SPBC776.02c.1">
    <property type="protein sequence ID" value="SPBC776.02c.1:pep"/>
    <property type="gene ID" value="SPBC776.02c"/>
</dbReference>
<dbReference type="GeneID" id="2541193"/>
<dbReference type="KEGG" id="spo:2541193"/>
<dbReference type="PomBase" id="SPBC776.02c">
    <property type="gene designation" value="dis2"/>
</dbReference>
<dbReference type="VEuPathDB" id="FungiDB:SPBC776.02c"/>
<dbReference type="eggNOG" id="KOG0374">
    <property type="taxonomic scope" value="Eukaryota"/>
</dbReference>
<dbReference type="HOGENOM" id="CLU_004962_8_3_1"/>
<dbReference type="InParanoid" id="P13681"/>
<dbReference type="OMA" id="EEHEIRY"/>
<dbReference type="PhylomeDB" id="P13681"/>
<dbReference type="Reactome" id="R-SPO-2500257">
    <property type="pathway name" value="Resolution of Sister Chromatid Cohesion"/>
</dbReference>
<dbReference type="PRO" id="PR:P13681"/>
<dbReference type="Proteomes" id="UP000002485">
    <property type="component" value="Chromosome II"/>
</dbReference>
<dbReference type="GO" id="GO:1902716">
    <property type="term" value="C:cell cortex of growing cell tip"/>
    <property type="evidence" value="ECO:0000314"/>
    <property type="project" value="PomBase"/>
</dbReference>
<dbReference type="GO" id="GO:0140472">
    <property type="term" value="C:cell cortex of non-growing cell tip"/>
    <property type="evidence" value="ECO:0000314"/>
    <property type="project" value="PomBase"/>
</dbReference>
<dbReference type="GO" id="GO:0032153">
    <property type="term" value="C:cell division site"/>
    <property type="evidence" value="ECO:0000314"/>
    <property type="project" value="PomBase"/>
</dbReference>
<dbReference type="GO" id="GO:0051286">
    <property type="term" value="C:cell tip"/>
    <property type="evidence" value="ECO:0000314"/>
    <property type="project" value="PomBase"/>
</dbReference>
<dbReference type="GO" id="GO:0061638">
    <property type="term" value="C:CENP-A containing chromatin"/>
    <property type="evidence" value="ECO:0000314"/>
    <property type="project" value="PomBase"/>
</dbReference>
<dbReference type="GO" id="GO:0000785">
    <property type="term" value="C:chromatin"/>
    <property type="evidence" value="ECO:0000314"/>
    <property type="project" value="PomBase"/>
</dbReference>
<dbReference type="GO" id="GO:0005737">
    <property type="term" value="C:cytoplasm"/>
    <property type="evidence" value="ECO:0007005"/>
    <property type="project" value="PomBase"/>
</dbReference>
<dbReference type="GO" id="GO:0005829">
    <property type="term" value="C:cytosol"/>
    <property type="evidence" value="ECO:0007005"/>
    <property type="project" value="PomBase"/>
</dbReference>
<dbReference type="GO" id="GO:1990567">
    <property type="term" value="C:DPS complex"/>
    <property type="evidence" value="ECO:0000314"/>
    <property type="project" value="PomBase"/>
</dbReference>
<dbReference type="GO" id="GO:0000791">
    <property type="term" value="C:euchromatin"/>
    <property type="evidence" value="ECO:0000269"/>
    <property type="project" value="PomBase"/>
</dbReference>
<dbReference type="GO" id="GO:0005847">
    <property type="term" value="C:mRNA cleavage and polyadenylation specificity factor complex"/>
    <property type="evidence" value="ECO:0000314"/>
    <property type="project" value="PomBase"/>
</dbReference>
<dbReference type="GO" id="GO:0005634">
    <property type="term" value="C:nucleus"/>
    <property type="evidence" value="ECO:0000314"/>
    <property type="project" value="PomBase"/>
</dbReference>
<dbReference type="GO" id="GO:0000164">
    <property type="term" value="C:protein phosphatase type 1 complex"/>
    <property type="evidence" value="ECO:0000353"/>
    <property type="project" value="PomBase"/>
</dbReference>
<dbReference type="GO" id="GO:0072357">
    <property type="term" value="C:PTW/PP1 phosphatase complex"/>
    <property type="evidence" value="ECO:0000353"/>
    <property type="project" value="PomBase"/>
</dbReference>
<dbReference type="GO" id="GO:0046872">
    <property type="term" value="F:metal ion binding"/>
    <property type="evidence" value="ECO:0007669"/>
    <property type="project" value="UniProtKB-KW"/>
</dbReference>
<dbReference type="GO" id="GO:0004722">
    <property type="term" value="F:protein serine/threonine phosphatase activity"/>
    <property type="evidence" value="ECO:0000314"/>
    <property type="project" value="PomBase"/>
</dbReference>
<dbReference type="GO" id="GO:0180005">
    <property type="term" value="F:RNA polymerase II CTD heptapeptide repeat T4 phosphatase activity"/>
    <property type="evidence" value="ECO:0000269"/>
    <property type="project" value="PomBase"/>
</dbReference>
<dbReference type="GO" id="GO:0008608">
    <property type="term" value="P:attachment of spindle microtubules to kinetochore"/>
    <property type="evidence" value="ECO:0000316"/>
    <property type="project" value="PomBase"/>
</dbReference>
<dbReference type="GO" id="GO:0051301">
    <property type="term" value="P:cell division"/>
    <property type="evidence" value="ECO:0007669"/>
    <property type="project" value="UniProtKB-KW"/>
</dbReference>
<dbReference type="GO" id="GO:0098653">
    <property type="term" value="P:centromere clustering"/>
    <property type="evidence" value="ECO:0000315"/>
    <property type="project" value="PomBase"/>
</dbReference>
<dbReference type="GO" id="GO:0007059">
    <property type="term" value="P:chromosome segregation"/>
    <property type="evidence" value="ECO:0000318"/>
    <property type="project" value="GO_Central"/>
</dbReference>
<dbReference type="GO" id="GO:0180010">
    <property type="term" value="P:co-transcriptional mRNA 3'-end processing, cleavage and polyadenylation pathway"/>
    <property type="evidence" value="ECO:0000305"/>
    <property type="project" value="PomBase"/>
</dbReference>
<dbReference type="GO" id="GO:1902426">
    <property type="term" value="P:deactivation of mitotic spindle assembly checkpoint"/>
    <property type="evidence" value="ECO:0000315"/>
    <property type="project" value="PomBase"/>
</dbReference>
<dbReference type="GO" id="GO:1902425">
    <property type="term" value="P:positive regulation of attachment of mitotic spindle microtubules to kinetochore"/>
    <property type="evidence" value="ECO:0000316"/>
    <property type="project" value="PomBase"/>
</dbReference>
<dbReference type="GO" id="GO:0031536">
    <property type="term" value="P:positive regulation of exit from mitosis"/>
    <property type="evidence" value="ECO:0000269"/>
    <property type="project" value="PomBase"/>
</dbReference>
<dbReference type="GO" id="GO:0045842">
    <property type="term" value="P:positive regulation of mitotic metaphase/anaphase transition"/>
    <property type="evidence" value="ECO:0000315"/>
    <property type="project" value="PomBase"/>
</dbReference>
<dbReference type="GO" id="GO:1904595">
    <property type="term" value="P:positive regulation of termination of RNA polymerase II transcription"/>
    <property type="evidence" value="ECO:0000315"/>
    <property type="project" value="PomBase"/>
</dbReference>
<dbReference type="GO" id="GO:2000114">
    <property type="term" value="P:regulation of establishment of cell polarity"/>
    <property type="evidence" value="ECO:0000269"/>
    <property type="project" value="PomBase"/>
</dbReference>
<dbReference type="GO" id="GO:0010389">
    <property type="term" value="P:regulation of G2/M transition of mitotic cell cycle"/>
    <property type="evidence" value="ECO:0000269"/>
    <property type="project" value="PomBase"/>
</dbReference>
<dbReference type="GO" id="GO:0007346">
    <property type="term" value="P:regulation of mitotic cell cycle"/>
    <property type="evidence" value="ECO:0000318"/>
    <property type="project" value="GO_Central"/>
</dbReference>
<dbReference type="CDD" id="cd07414">
    <property type="entry name" value="MPP_PP1_PPKL"/>
    <property type="match status" value="1"/>
</dbReference>
<dbReference type="FunFam" id="3.60.21.10:FF:000004">
    <property type="entry name" value="Serine/threonine-protein phosphatase"/>
    <property type="match status" value="1"/>
</dbReference>
<dbReference type="Gene3D" id="3.60.21.10">
    <property type="match status" value="1"/>
</dbReference>
<dbReference type="InterPro" id="IPR004843">
    <property type="entry name" value="Calcineurin-like_PHP_ApaH"/>
</dbReference>
<dbReference type="InterPro" id="IPR029052">
    <property type="entry name" value="Metallo-depent_PP-like"/>
</dbReference>
<dbReference type="InterPro" id="IPR050341">
    <property type="entry name" value="PP1_catalytic_subunit"/>
</dbReference>
<dbReference type="InterPro" id="IPR006186">
    <property type="entry name" value="Ser/Thr-sp_prot-phosphatase"/>
</dbReference>
<dbReference type="InterPro" id="IPR031675">
    <property type="entry name" value="STPPase_N"/>
</dbReference>
<dbReference type="PANTHER" id="PTHR11668">
    <property type="entry name" value="SERINE/THREONINE PROTEIN PHOSPHATASE"/>
    <property type="match status" value="1"/>
</dbReference>
<dbReference type="PANTHER" id="PTHR11668:SF300">
    <property type="entry name" value="SERINE_THREONINE-PROTEIN PHOSPHATASE"/>
    <property type="match status" value="1"/>
</dbReference>
<dbReference type="Pfam" id="PF00149">
    <property type="entry name" value="Metallophos"/>
    <property type="match status" value="1"/>
</dbReference>
<dbReference type="Pfam" id="PF16891">
    <property type="entry name" value="STPPase_N"/>
    <property type="match status" value="1"/>
</dbReference>
<dbReference type="PRINTS" id="PR00114">
    <property type="entry name" value="STPHPHTASE"/>
</dbReference>
<dbReference type="SMART" id="SM00156">
    <property type="entry name" value="PP2Ac"/>
    <property type="match status" value="1"/>
</dbReference>
<dbReference type="SUPFAM" id="SSF56300">
    <property type="entry name" value="Metallo-dependent phosphatases"/>
    <property type="match status" value="1"/>
</dbReference>
<dbReference type="PROSITE" id="PS00125">
    <property type="entry name" value="SER_THR_PHOSPHATASE"/>
    <property type="match status" value="1"/>
</dbReference>
<proteinExistence type="evidence at protein level"/>
<name>PP11_SCHPO</name>